<organism>
    <name type="scientific">Drosophila melanogaster</name>
    <name type="common">Fruit fly</name>
    <dbReference type="NCBI Taxonomy" id="7227"/>
    <lineage>
        <taxon>Eukaryota</taxon>
        <taxon>Metazoa</taxon>
        <taxon>Ecdysozoa</taxon>
        <taxon>Arthropoda</taxon>
        <taxon>Hexapoda</taxon>
        <taxon>Insecta</taxon>
        <taxon>Pterygota</taxon>
        <taxon>Neoptera</taxon>
        <taxon>Endopterygota</taxon>
        <taxon>Diptera</taxon>
        <taxon>Brachycera</taxon>
        <taxon>Muscomorpha</taxon>
        <taxon>Ephydroidea</taxon>
        <taxon>Drosophilidae</taxon>
        <taxon>Drosophila</taxon>
        <taxon>Sophophora</taxon>
    </lineage>
</organism>
<dbReference type="EMBL" id="X67049">
    <property type="protein sequence ID" value="CAA47434.1"/>
    <property type="molecule type" value="mRNA"/>
</dbReference>
<dbReference type="EMBL" id="M96167">
    <property type="protein sequence ID" value="AAA28910.1"/>
    <property type="molecule type" value="Genomic_DNA"/>
</dbReference>
<dbReference type="EMBL" id="AJ276315">
    <property type="protein sequence ID" value="CAB77021.1"/>
    <property type="molecule type" value="Genomic_DNA"/>
</dbReference>
<dbReference type="EMBL" id="AY779906">
    <property type="protein sequence ID" value="AAV59046.1"/>
    <property type="molecule type" value="Genomic_DNA"/>
</dbReference>
<dbReference type="EMBL" id="AY779907">
    <property type="protein sequence ID" value="AAV59058.1"/>
    <property type="molecule type" value="Genomic_DNA"/>
</dbReference>
<dbReference type="EMBL" id="AY779908">
    <property type="protein sequence ID" value="AAV59070.1"/>
    <property type="molecule type" value="Genomic_DNA"/>
</dbReference>
<dbReference type="EMBL" id="AY779909">
    <property type="protein sequence ID" value="AAV59082.1"/>
    <property type="molecule type" value="Genomic_DNA"/>
</dbReference>
<dbReference type="EMBL" id="AY779910">
    <property type="protein sequence ID" value="AAV59094.1"/>
    <property type="molecule type" value="Genomic_DNA"/>
</dbReference>
<dbReference type="EMBL" id="AY779911">
    <property type="protein sequence ID" value="AAV59106.1"/>
    <property type="molecule type" value="Genomic_DNA"/>
</dbReference>
<dbReference type="EMBL" id="AY779912">
    <property type="protein sequence ID" value="AAV59118.1"/>
    <property type="molecule type" value="Genomic_DNA"/>
</dbReference>
<dbReference type="EMBL" id="AY779913">
    <property type="protein sequence ID" value="AAV59130.1"/>
    <property type="molecule type" value="Genomic_DNA"/>
</dbReference>
<dbReference type="EMBL" id="AY779914">
    <property type="protein sequence ID" value="AAV59142.1"/>
    <property type="molecule type" value="Genomic_DNA"/>
</dbReference>
<dbReference type="EMBL" id="AY779915">
    <property type="protein sequence ID" value="AAV59154.1"/>
    <property type="molecule type" value="Genomic_DNA"/>
</dbReference>
<dbReference type="EMBL" id="AY779916">
    <property type="protein sequence ID" value="AAV59166.1"/>
    <property type="molecule type" value="Genomic_DNA"/>
</dbReference>
<dbReference type="EMBL" id="AY779917">
    <property type="protein sequence ID" value="AAV59178.1"/>
    <property type="molecule type" value="Genomic_DNA"/>
</dbReference>
<dbReference type="EMBL" id="AY779918">
    <property type="protein sequence ID" value="AAV59190.1"/>
    <property type="molecule type" value="Genomic_DNA"/>
</dbReference>
<dbReference type="EMBL" id="AY779919">
    <property type="protein sequence ID" value="AAV59202.1"/>
    <property type="molecule type" value="Genomic_DNA"/>
</dbReference>
<dbReference type="EMBL" id="AY779920">
    <property type="protein sequence ID" value="AAV59214.1"/>
    <property type="molecule type" value="Genomic_DNA"/>
</dbReference>
<dbReference type="EMBL" id="AY779921">
    <property type="protein sequence ID" value="AAV59226.1"/>
    <property type="molecule type" value="Genomic_DNA"/>
</dbReference>
<dbReference type="EMBL" id="AE014297">
    <property type="protein sequence ID" value="AAF56545.1"/>
    <property type="molecule type" value="Genomic_DNA"/>
</dbReference>
<dbReference type="EMBL" id="BT022125">
    <property type="protein sequence ID" value="AAY51520.1"/>
    <property type="molecule type" value="mRNA"/>
</dbReference>
<dbReference type="PIR" id="B46177">
    <property type="entry name" value="B46177"/>
</dbReference>
<dbReference type="RefSeq" id="NP_524504.2">
    <property type="nucleotide sequence ID" value="NM_079780.3"/>
</dbReference>
<dbReference type="SMR" id="Q01070"/>
<dbReference type="BioGRID" id="68051">
    <property type="interactions" value="30"/>
</dbReference>
<dbReference type="DIP" id="DIP-723N"/>
<dbReference type="ELM" id="Q01070"/>
<dbReference type="FunCoup" id="Q01070">
    <property type="interactions" value="26"/>
</dbReference>
<dbReference type="IntAct" id="Q01070">
    <property type="interactions" value="21"/>
</dbReference>
<dbReference type="STRING" id="7227.FBpp0084329"/>
<dbReference type="PaxDb" id="7227-FBpp0084329"/>
<dbReference type="DNASU" id="43151"/>
<dbReference type="EnsemblMetazoa" id="FBtr0084955">
    <property type="protein sequence ID" value="FBpp0084329"/>
    <property type="gene ID" value="FBgn0002735"/>
</dbReference>
<dbReference type="GeneID" id="43151"/>
<dbReference type="KEGG" id="dme:Dmel_CG8333"/>
<dbReference type="AGR" id="FB:FBgn0002735"/>
<dbReference type="CTD" id="43151"/>
<dbReference type="FlyBase" id="FBgn0002735">
    <property type="gene designation" value="E(spl)mgamma-HLH"/>
</dbReference>
<dbReference type="VEuPathDB" id="VectorBase:FBgn0002735"/>
<dbReference type="eggNOG" id="KOG4304">
    <property type="taxonomic scope" value="Eukaryota"/>
</dbReference>
<dbReference type="GeneTree" id="ENSGT00940000167178"/>
<dbReference type="HOGENOM" id="CLU_068550_2_2_1"/>
<dbReference type="InParanoid" id="Q01070"/>
<dbReference type="OMA" id="NEPIWRP"/>
<dbReference type="OrthoDB" id="6085656at2759"/>
<dbReference type="PhylomeDB" id="Q01070"/>
<dbReference type="SignaLink" id="Q01070"/>
<dbReference type="BioGRID-ORCS" id="43151">
    <property type="hits" value="0 hits in 3 CRISPR screens"/>
</dbReference>
<dbReference type="GenomeRNAi" id="43151"/>
<dbReference type="PRO" id="PR:Q01070"/>
<dbReference type="Proteomes" id="UP000000803">
    <property type="component" value="Chromosome 3R"/>
</dbReference>
<dbReference type="Bgee" id="FBgn0002735">
    <property type="expression patterns" value="Expressed in eye disc (Drosophila) and 33 other cell types or tissues"/>
</dbReference>
<dbReference type="GO" id="GO:0005634">
    <property type="term" value="C:nucleus"/>
    <property type="evidence" value="ECO:0000315"/>
    <property type="project" value="UniProtKB"/>
</dbReference>
<dbReference type="GO" id="GO:0000987">
    <property type="term" value="F:cis-regulatory region sequence-specific DNA binding"/>
    <property type="evidence" value="ECO:0000314"/>
    <property type="project" value="UniProtKB"/>
</dbReference>
<dbReference type="GO" id="GO:0003700">
    <property type="term" value="F:DNA-binding transcription factor activity"/>
    <property type="evidence" value="ECO:0000315"/>
    <property type="project" value="UniProtKB"/>
</dbReference>
<dbReference type="GO" id="GO:0140297">
    <property type="term" value="F:DNA-binding transcription factor binding"/>
    <property type="evidence" value="ECO:0000316"/>
    <property type="project" value="FlyBase"/>
</dbReference>
<dbReference type="GO" id="GO:0046983">
    <property type="term" value="F:protein dimerization activity"/>
    <property type="evidence" value="ECO:0007669"/>
    <property type="project" value="InterPro"/>
</dbReference>
<dbReference type="GO" id="GO:0000978">
    <property type="term" value="F:RNA polymerase II cis-regulatory region sequence-specific DNA binding"/>
    <property type="evidence" value="ECO:0000318"/>
    <property type="project" value="GO_Central"/>
</dbReference>
<dbReference type="GO" id="GO:0043565">
    <property type="term" value="F:sequence-specific DNA binding"/>
    <property type="evidence" value="ECO:0000314"/>
    <property type="project" value="UniProtKB"/>
</dbReference>
<dbReference type="GO" id="GO:1990837">
    <property type="term" value="F:sequence-specific double-stranded DNA binding"/>
    <property type="evidence" value="ECO:0000314"/>
    <property type="project" value="UniProtKB"/>
</dbReference>
<dbReference type="GO" id="GO:0030154">
    <property type="term" value="P:cell differentiation"/>
    <property type="evidence" value="ECO:0007669"/>
    <property type="project" value="UniProtKB-KW"/>
</dbReference>
<dbReference type="GO" id="GO:0000122">
    <property type="term" value="P:negative regulation of transcription by RNA polymerase II"/>
    <property type="evidence" value="ECO:0000314"/>
    <property type="project" value="FlyBase"/>
</dbReference>
<dbReference type="GO" id="GO:0007399">
    <property type="term" value="P:nervous system development"/>
    <property type="evidence" value="ECO:0007669"/>
    <property type="project" value="UniProtKB-KW"/>
</dbReference>
<dbReference type="GO" id="GO:0097150">
    <property type="term" value="P:neuronal stem cell population maintenance"/>
    <property type="evidence" value="ECO:0000315"/>
    <property type="project" value="FlyBase"/>
</dbReference>
<dbReference type="GO" id="GO:0007219">
    <property type="term" value="P:Notch signaling pathway"/>
    <property type="evidence" value="ECO:0007669"/>
    <property type="project" value="UniProtKB-KW"/>
</dbReference>
<dbReference type="GO" id="GO:0002052">
    <property type="term" value="P:positive regulation of neuroblast proliferation"/>
    <property type="evidence" value="ECO:0000315"/>
    <property type="project" value="UniProtKB"/>
</dbReference>
<dbReference type="GO" id="GO:1902692">
    <property type="term" value="P:regulation of neuroblast proliferation"/>
    <property type="evidence" value="ECO:0000315"/>
    <property type="project" value="UniProtKB"/>
</dbReference>
<dbReference type="GO" id="GO:0050767">
    <property type="term" value="P:regulation of neurogenesis"/>
    <property type="evidence" value="ECO:0000318"/>
    <property type="project" value="GO_Central"/>
</dbReference>
<dbReference type="GO" id="GO:0048190">
    <property type="term" value="P:wing disc dorsal/ventral pattern formation"/>
    <property type="evidence" value="ECO:0000316"/>
    <property type="project" value="FlyBase"/>
</dbReference>
<dbReference type="CDD" id="cd19741">
    <property type="entry name" value="bHLH-O_ESMB_like"/>
    <property type="match status" value="1"/>
</dbReference>
<dbReference type="FunFam" id="4.10.280.10:FF:000009">
    <property type="entry name" value="Transcription factor HES-1"/>
    <property type="match status" value="1"/>
</dbReference>
<dbReference type="Gene3D" id="6.10.250.980">
    <property type="match status" value="1"/>
</dbReference>
<dbReference type="Gene3D" id="4.10.280.10">
    <property type="entry name" value="Helix-loop-helix DNA-binding domain"/>
    <property type="match status" value="1"/>
</dbReference>
<dbReference type="InterPro" id="IPR011598">
    <property type="entry name" value="bHLH_dom"/>
</dbReference>
<dbReference type="InterPro" id="IPR050370">
    <property type="entry name" value="HES_HEY"/>
</dbReference>
<dbReference type="InterPro" id="IPR036638">
    <property type="entry name" value="HLH_DNA-bd_sf"/>
</dbReference>
<dbReference type="InterPro" id="IPR003650">
    <property type="entry name" value="Orange_dom"/>
</dbReference>
<dbReference type="PANTHER" id="PTHR10985">
    <property type="entry name" value="BASIC HELIX-LOOP-HELIX TRANSCRIPTION FACTOR, HES-RELATED"/>
    <property type="match status" value="1"/>
</dbReference>
<dbReference type="Pfam" id="PF07527">
    <property type="entry name" value="Hairy_orange"/>
    <property type="match status" value="1"/>
</dbReference>
<dbReference type="Pfam" id="PF00010">
    <property type="entry name" value="HLH"/>
    <property type="match status" value="1"/>
</dbReference>
<dbReference type="SMART" id="SM00353">
    <property type="entry name" value="HLH"/>
    <property type="match status" value="1"/>
</dbReference>
<dbReference type="SMART" id="SM00511">
    <property type="entry name" value="ORANGE"/>
    <property type="match status" value="1"/>
</dbReference>
<dbReference type="SUPFAM" id="SSF47459">
    <property type="entry name" value="HLH, helix-loop-helix DNA-binding domain"/>
    <property type="match status" value="1"/>
</dbReference>
<dbReference type="SUPFAM" id="SSF158457">
    <property type="entry name" value="Orange domain-like"/>
    <property type="match status" value="1"/>
</dbReference>
<dbReference type="PROSITE" id="PS50888">
    <property type="entry name" value="BHLH"/>
    <property type="match status" value="1"/>
</dbReference>
<dbReference type="PROSITE" id="PS51054">
    <property type="entry name" value="ORANGE"/>
    <property type="match status" value="1"/>
</dbReference>
<sequence>MSSLQMSEMSKTYQYRKVMKPMLERKRRARINKCLDELKDLMVATLESEGEHVTRLEKADILELTVTHLQKMKQQRQHKRASGDESLTPAEGFRSGYIHAVNEVSRSLSQLPGMNVSLGTQLMTHLGQRLNQIQPAEKEVLPVTAPLSVHIANRDAYSVPISPISSYAGSPNSNTSSTSHSLLTTIDVTKMEDDSEDEENVWRPW</sequence>
<feature type="chain" id="PRO_0000127177" description="Enhancer of split mgamma protein">
    <location>
        <begin position="1"/>
        <end position="205"/>
    </location>
</feature>
<feature type="domain" description="bHLH" evidence="4">
    <location>
        <begin position="15"/>
        <end position="72"/>
    </location>
</feature>
<feature type="domain" description="Orange" evidence="3">
    <location>
        <begin position="93"/>
        <end position="126"/>
    </location>
</feature>
<feature type="short sequence motif" description="WRPW motif">
    <location>
        <begin position="202"/>
        <end position="205"/>
    </location>
</feature>
<feature type="sequence conflict" description="In Ref. 2; CAA47434." evidence="10" ref="2">
    <original>S</original>
    <variation>T</variation>
    <location>
        <position position="166"/>
    </location>
</feature>
<gene>
    <name evidence="11" type="primary">E(spl)mgamma-HLH</name>
    <name evidence="11" type="synonym">HLHmgamma</name>
    <name evidence="11" type="ORF">CG8333</name>
</gene>
<name>ESMC_DROME</name>
<comment type="function">
    <text evidence="5 6 7 8 9">Transcriptional repressor of genes that require a bHLH protein for their transcription (PubMed:24618901). May serve as a transcriptional regulator of the Achaete-scute complex (AS-C) genes (PubMed:1528887). Contributes to the neural-epidermal lineage decision during early neurogenesis (PubMed:1427040). Part of the Notch signaling pathway, plays a role in neuroblasts proliferation in embryos and larvae (PubMed:10790334, PubMed:22357926). In the larval brain, together with other self-renewal transcriptional repressors such as klu and dpn, required for type II neuroblast self-renewal and for maintaining erm in an inactive state in intermediate neural progenitors (INP) derived from type II neuroblasts (PubMed:24618901).</text>
</comment>
<comment type="subunit">
    <text evidence="1 2 8">Homodimer (PubMed:22357926). Heterodimer with dpn (PubMed:22357926). Might form higher-order oligomers (PubMed:22357926). Transcription repression requires formation of a complex with a corepressor protein (Groucho) (By similarity).</text>
</comment>
<comment type="interaction">
    <interactant intactId="EBI-119159">
        <id>Q01070</id>
    </interactant>
    <interactant intactId="EBI-152748">
        <id>P10083</id>
        <label>ac</label>
    </interactant>
    <organismsDiffer>false</organismsDiffer>
    <experiments>3</experiments>
</comment>
<comment type="interaction">
    <interactant intactId="EBI-119159">
        <id>Q01070</id>
    </interactant>
    <interactant intactId="EBI-168547">
        <id>Q7JZ51</id>
        <label>insb</label>
    </interactant>
    <organismsDiffer>false</organismsDiffer>
    <experiments>4</experiments>
</comment>
<comment type="subcellular location">
    <subcellularLocation>
        <location evidence="10">Nucleus</location>
    </subcellularLocation>
</comment>
<comment type="tissue specificity">
    <text evidence="5">Expressed in sensory organ precursors in the wing, leg and eye imaginal disk.</text>
</comment>
<comment type="developmental stage">
    <text evidence="6 8">In embryo, detected in the neuroectoderm at stage 8, and later in neuroblasts at stage 9 (at protein level) (PubMed:22357926). By stage 16, detected only in the neuroblasts (at protein level) (PubMed:22357926). In larvae, detected in a subset of neuroblasts, some of which will give rise to the optic lobe (at protein level) (PubMed:22357926). In embryo, detected during the initial stages of germ band exclusively within the neuroectoderm, both in the territory of the trunk and in cephalic regions (PubMed:1427040). During stage 9, detected within the procephalic lobe and the ventral ectoderm (PubMed:1427040).</text>
</comment>
<comment type="domain">
    <text>Has a particular type of basic domain (presence of a helix-interrupting proline) that binds to the N-box (CACNAG), rather than the canonical E-box (CANNTG).</text>
</comment>
<comment type="domain">
    <text>The C-terminal WRPW motif is a transcriptional repression domain necessary for the interaction with Groucho, a transcriptional corepressor recruited to specific target DNA by Hairy-related proteins.</text>
</comment>
<protein>
    <recommendedName>
        <fullName>Enhancer of split mgamma protein</fullName>
        <shortName>E(spl)mgamma</shortName>
    </recommendedName>
    <alternativeName>
        <fullName>Split locus enhancer protein mB</fullName>
    </alternativeName>
</protein>
<reference key="1">
    <citation type="journal article" date="1992" name="Genetics">
        <title>Seven genes of the Enhancer of split complex of Drosophila melanogaster encode helix-loop-helix proteins.</title>
        <authorList>
            <person name="Knust E."/>
            <person name="Schrons H."/>
            <person name="Grawe F."/>
            <person name="Campos-Ortega J.A."/>
        </authorList>
    </citation>
    <scope>NUCLEOTIDE SEQUENCE [MRNA]</scope>
    <scope>FUNCTION</scope>
    <scope>DEVELOPMENTAL STAGE</scope>
    <source>
        <strain>Oregon-R</strain>
        <tissue>Embryo</tissue>
    </source>
</reference>
<reference key="2">
    <citation type="journal article" date="1992" name="Proc. Natl. Acad. Sci. U.S.A.">
        <title>The Enhancer of split [E(spl)] locus of Drosophila encodes seven independent helix-loop-helix proteins.</title>
        <authorList>
            <person name="Delidakis C."/>
            <person name="Artavanis-Tsakonas S."/>
        </authorList>
    </citation>
    <scope>NUCLEOTIDE SEQUENCE [GENOMIC DNA]</scope>
    <scope>FUNCTION</scope>
    <source>
        <tissue>Embryo</tissue>
    </source>
</reference>
<reference key="3">
    <citation type="journal article" date="2000" name="Dev. Biol.">
        <title>Spatially restricted factors cooperate with Notch in the regulation of Enhancer of split genes.</title>
        <authorList>
            <person name="Cooper M.T.D."/>
            <person name="Tyler D.M."/>
            <person name="Furriols M."/>
            <person name="Chalkiadaki A."/>
            <person name="Delidakis C."/>
            <person name="Bray S."/>
        </authorList>
    </citation>
    <scope>NUCLEOTIDE SEQUENCE [GENOMIC DNA]</scope>
    <scope>FUNCTION</scope>
    <scope>TISSUE SPECIFICITY</scope>
</reference>
<reference key="4">
    <citation type="journal article" date="2005" name="Mol. Biol. Evol.">
        <title>Identifying signatures of selection at the enhancer of split neurogenic gene complex in Drosophila.</title>
        <authorList>
            <person name="Macdonald S.J."/>
            <person name="Long A.D."/>
        </authorList>
    </citation>
    <scope>NUCLEOTIDE SEQUENCE [GENOMIC DNA]</scope>
    <source>
        <strain>NVIII-1</strain>
        <strain>NVIII-18</strain>
        <strain>NVIII-2</strain>
        <strain>NVIII-22</strain>
        <strain>NVIII-24</strain>
        <strain>NVIII-28</strain>
        <strain>NVIII-41</strain>
        <strain>NVIII-42</strain>
        <strain>NVIII-46</strain>
        <strain>NVIII-5</strain>
        <strain>NVIII-9</strain>
        <strain>NVIII-m11</strain>
        <strain>NVIII-m12</strain>
        <strain>NVIII-m13</strain>
        <strain>NVIII-m15</strain>
        <strain>NVIII-m19</strain>
    </source>
</reference>
<reference key="5">
    <citation type="journal article" date="2000" name="Science">
        <title>The genome sequence of Drosophila melanogaster.</title>
        <authorList>
            <person name="Adams M.D."/>
            <person name="Celniker S.E."/>
            <person name="Holt R.A."/>
            <person name="Evans C.A."/>
            <person name="Gocayne J.D."/>
            <person name="Amanatides P.G."/>
            <person name="Scherer S.E."/>
            <person name="Li P.W."/>
            <person name="Hoskins R.A."/>
            <person name="Galle R.F."/>
            <person name="George R.A."/>
            <person name="Lewis S.E."/>
            <person name="Richards S."/>
            <person name="Ashburner M."/>
            <person name="Henderson S.N."/>
            <person name="Sutton G.G."/>
            <person name="Wortman J.R."/>
            <person name="Yandell M.D."/>
            <person name="Zhang Q."/>
            <person name="Chen L.X."/>
            <person name="Brandon R.C."/>
            <person name="Rogers Y.-H.C."/>
            <person name="Blazej R.G."/>
            <person name="Champe M."/>
            <person name="Pfeiffer B.D."/>
            <person name="Wan K.H."/>
            <person name="Doyle C."/>
            <person name="Baxter E.G."/>
            <person name="Helt G."/>
            <person name="Nelson C.R."/>
            <person name="Miklos G.L.G."/>
            <person name="Abril J.F."/>
            <person name="Agbayani A."/>
            <person name="An H.-J."/>
            <person name="Andrews-Pfannkoch C."/>
            <person name="Baldwin D."/>
            <person name="Ballew R.M."/>
            <person name="Basu A."/>
            <person name="Baxendale J."/>
            <person name="Bayraktaroglu L."/>
            <person name="Beasley E.M."/>
            <person name="Beeson K.Y."/>
            <person name="Benos P.V."/>
            <person name="Berman B.P."/>
            <person name="Bhandari D."/>
            <person name="Bolshakov S."/>
            <person name="Borkova D."/>
            <person name="Botchan M.R."/>
            <person name="Bouck J."/>
            <person name="Brokstein P."/>
            <person name="Brottier P."/>
            <person name="Burtis K.C."/>
            <person name="Busam D.A."/>
            <person name="Butler H."/>
            <person name="Cadieu E."/>
            <person name="Center A."/>
            <person name="Chandra I."/>
            <person name="Cherry J.M."/>
            <person name="Cawley S."/>
            <person name="Dahlke C."/>
            <person name="Davenport L.B."/>
            <person name="Davies P."/>
            <person name="de Pablos B."/>
            <person name="Delcher A."/>
            <person name="Deng Z."/>
            <person name="Mays A.D."/>
            <person name="Dew I."/>
            <person name="Dietz S.M."/>
            <person name="Dodson K."/>
            <person name="Doup L.E."/>
            <person name="Downes M."/>
            <person name="Dugan-Rocha S."/>
            <person name="Dunkov B.C."/>
            <person name="Dunn P."/>
            <person name="Durbin K.J."/>
            <person name="Evangelista C.C."/>
            <person name="Ferraz C."/>
            <person name="Ferriera S."/>
            <person name="Fleischmann W."/>
            <person name="Fosler C."/>
            <person name="Gabrielian A.E."/>
            <person name="Garg N.S."/>
            <person name="Gelbart W.M."/>
            <person name="Glasser K."/>
            <person name="Glodek A."/>
            <person name="Gong F."/>
            <person name="Gorrell J.H."/>
            <person name="Gu Z."/>
            <person name="Guan P."/>
            <person name="Harris M."/>
            <person name="Harris N.L."/>
            <person name="Harvey D.A."/>
            <person name="Heiman T.J."/>
            <person name="Hernandez J.R."/>
            <person name="Houck J."/>
            <person name="Hostin D."/>
            <person name="Houston K.A."/>
            <person name="Howland T.J."/>
            <person name="Wei M.-H."/>
            <person name="Ibegwam C."/>
            <person name="Jalali M."/>
            <person name="Kalush F."/>
            <person name="Karpen G.H."/>
            <person name="Ke Z."/>
            <person name="Kennison J.A."/>
            <person name="Ketchum K.A."/>
            <person name="Kimmel B.E."/>
            <person name="Kodira C.D."/>
            <person name="Kraft C.L."/>
            <person name="Kravitz S."/>
            <person name="Kulp D."/>
            <person name="Lai Z."/>
            <person name="Lasko P."/>
            <person name="Lei Y."/>
            <person name="Levitsky A.A."/>
            <person name="Li J.H."/>
            <person name="Li Z."/>
            <person name="Liang Y."/>
            <person name="Lin X."/>
            <person name="Liu X."/>
            <person name="Mattei B."/>
            <person name="McIntosh T.C."/>
            <person name="McLeod M.P."/>
            <person name="McPherson D."/>
            <person name="Merkulov G."/>
            <person name="Milshina N.V."/>
            <person name="Mobarry C."/>
            <person name="Morris J."/>
            <person name="Moshrefi A."/>
            <person name="Mount S.M."/>
            <person name="Moy M."/>
            <person name="Murphy B."/>
            <person name="Murphy L."/>
            <person name="Muzny D.M."/>
            <person name="Nelson D.L."/>
            <person name="Nelson D.R."/>
            <person name="Nelson K.A."/>
            <person name="Nixon K."/>
            <person name="Nusskern D.R."/>
            <person name="Pacleb J.M."/>
            <person name="Palazzolo M."/>
            <person name="Pittman G.S."/>
            <person name="Pan S."/>
            <person name="Pollard J."/>
            <person name="Puri V."/>
            <person name="Reese M.G."/>
            <person name="Reinert K."/>
            <person name="Remington K."/>
            <person name="Saunders R.D.C."/>
            <person name="Scheeler F."/>
            <person name="Shen H."/>
            <person name="Shue B.C."/>
            <person name="Siden-Kiamos I."/>
            <person name="Simpson M."/>
            <person name="Skupski M.P."/>
            <person name="Smith T.J."/>
            <person name="Spier E."/>
            <person name="Spradling A.C."/>
            <person name="Stapleton M."/>
            <person name="Strong R."/>
            <person name="Sun E."/>
            <person name="Svirskas R."/>
            <person name="Tector C."/>
            <person name="Turner R."/>
            <person name="Venter E."/>
            <person name="Wang A.H."/>
            <person name="Wang X."/>
            <person name="Wang Z.-Y."/>
            <person name="Wassarman D.A."/>
            <person name="Weinstock G.M."/>
            <person name="Weissenbach J."/>
            <person name="Williams S.M."/>
            <person name="Woodage T."/>
            <person name="Worley K.C."/>
            <person name="Wu D."/>
            <person name="Yang S."/>
            <person name="Yao Q.A."/>
            <person name="Ye J."/>
            <person name="Yeh R.-F."/>
            <person name="Zaveri J.S."/>
            <person name="Zhan M."/>
            <person name="Zhang G."/>
            <person name="Zhao Q."/>
            <person name="Zheng L."/>
            <person name="Zheng X.H."/>
            <person name="Zhong F.N."/>
            <person name="Zhong W."/>
            <person name="Zhou X."/>
            <person name="Zhu S.C."/>
            <person name="Zhu X."/>
            <person name="Smith H.O."/>
            <person name="Gibbs R.A."/>
            <person name="Myers E.W."/>
            <person name="Rubin G.M."/>
            <person name="Venter J.C."/>
        </authorList>
    </citation>
    <scope>NUCLEOTIDE SEQUENCE [LARGE SCALE GENOMIC DNA]</scope>
    <source>
        <strain>Berkeley</strain>
    </source>
</reference>
<reference key="6">
    <citation type="journal article" date="2002" name="Genome Biol.">
        <title>Annotation of the Drosophila melanogaster euchromatic genome: a systematic review.</title>
        <authorList>
            <person name="Misra S."/>
            <person name="Crosby M.A."/>
            <person name="Mungall C.J."/>
            <person name="Matthews B.B."/>
            <person name="Campbell K.S."/>
            <person name="Hradecky P."/>
            <person name="Huang Y."/>
            <person name="Kaminker J.S."/>
            <person name="Millburn G.H."/>
            <person name="Prochnik S.E."/>
            <person name="Smith C.D."/>
            <person name="Tupy J.L."/>
            <person name="Whitfield E.J."/>
            <person name="Bayraktaroglu L."/>
            <person name="Berman B.P."/>
            <person name="Bettencourt B.R."/>
            <person name="Celniker S.E."/>
            <person name="de Grey A.D.N.J."/>
            <person name="Drysdale R.A."/>
            <person name="Harris N.L."/>
            <person name="Richter J."/>
            <person name="Russo S."/>
            <person name="Schroeder A.J."/>
            <person name="Shu S.Q."/>
            <person name="Stapleton M."/>
            <person name="Yamada C."/>
            <person name="Ashburner M."/>
            <person name="Gelbart W.M."/>
            <person name="Rubin G.M."/>
            <person name="Lewis S.E."/>
        </authorList>
    </citation>
    <scope>GENOME REANNOTATION</scope>
    <source>
        <strain>Berkeley</strain>
    </source>
</reference>
<reference key="7">
    <citation type="submission" date="2005-09" db="EMBL/GenBank/DDBJ databases">
        <authorList>
            <person name="Stapleton M."/>
            <person name="Carlson J.W."/>
            <person name="Chavez C."/>
            <person name="Frise E."/>
            <person name="George R.A."/>
            <person name="Pacleb J.M."/>
            <person name="Park S."/>
            <person name="Wan K.H."/>
            <person name="Yu C."/>
            <person name="Celniker S.E."/>
        </authorList>
    </citation>
    <scope>NUCLEOTIDE SEQUENCE [LARGE SCALE MRNA]</scope>
    <source>
        <strain>Berkeley</strain>
    </source>
</reference>
<reference key="8">
    <citation type="journal article" date="2012" name="Development">
        <title>bHLH-O proteins are crucial for Drosophila neuroblast self-renewal and mediate Notch-induced overproliferation.</title>
        <authorList>
            <person name="Zacharioudaki E."/>
            <person name="Magadi S.S."/>
            <person name="Delidakis C."/>
        </authorList>
    </citation>
    <scope>FUNCTION</scope>
    <scope>SUBUNIT</scope>
    <scope>INTERACTION WITH DPN</scope>
    <scope>DEVELOPMENTAL STAGE</scope>
</reference>
<reference key="9">
    <citation type="journal article" date="2014" name="Elife">
        <title>The Brm-HDAC3-Erm repressor complex suppresses dedifferentiation in Drosophila type II neuroblast lineages.</title>
        <authorList>
            <person name="Koe C.T."/>
            <person name="Li S."/>
            <person name="Rossi F."/>
            <person name="Wong J.J."/>
            <person name="Wang Y."/>
            <person name="Zhang Z."/>
            <person name="Chen K."/>
            <person name="Aw S.S."/>
            <person name="Richardson H.E."/>
            <person name="Robson P."/>
            <person name="Sung W.K."/>
            <person name="Yu F."/>
            <person name="Gonzalez C."/>
            <person name="Wang H."/>
        </authorList>
    </citation>
    <scope>FUNCTION</scope>
</reference>
<evidence type="ECO:0000250" key="1">
    <source>
        <dbReference type="UniProtKB" id="P14003"/>
    </source>
</evidence>
<evidence type="ECO:0000250" key="2">
    <source>
        <dbReference type="UniProtKB" id="Q26263"/>
    </source>
</evidence>
<evidence type="ECO:0000255" key="3">
    <source>
        <dbReference type="PROSITE-ProRule" id="PRU00380"/>
    </source>
</evidence>
<evidence type="ECO:0000255" key="4">
    <source>
        <dbReference type="PROSITE-ProRule" id="PRU00981"/>
    </source>
</evidence>
<evidence type="ECO:0000269" key="5">
    <source>
    </source>
</evidence>
<evidence type="ECO:0000269" key="6">
    <source>
    </source>
</evidence>
<evidence type="ECO:0000269" key="7">
    <source>
    </source>
</evidence>
<evidence type="ECO:0000269" key="8">
    <source>
    </source>
</evidence>
<evidence type="ECO:0000269" key="9">
    <source>
    </source>
</evidence>
<evidence type="ECO:0000305" key="10"/>
<evidence type="ECO:0000312" key="11">
    <source>
        <dbReference type="FlyBase" id="FBgn0002735"/>
    </source>
</evidence>
<keyword id="KW-0217">Developmental protein</keyword>
<keyword id="KW-0221">Differentiation</keyword>
<keyword id="KW-0238">DNA-binding</keyword>
<keyword id="KW-0524">Neurogenesis</keyword>
<keyword id="KW-0914">Notch signaling pathway</keyword>
<keyword id="KW-0539">Nucleus</keyword>
<keyword id="KW-1185">Reference proteome</keyword>
<keyword id="KW-0804">Transcription</keyword>
<keyword id="KW-0805">Transcription regulation</keyword>
<proteinExistence type="evidence at protein level"/>
<accession>Q01070</accession>
<accession>Q01898</accession>
<accession>Q5S4K4</accession>